<name>HMN3_HUMAN</name>
<protein>
    <recommendedName>
        <fullName evidence="4">Humanin-like 3</fullName>
        <shortName evidence="3">HN3</shortName>
    </recommendedName>
    <alternativeName>
        <fullName evidence="6">MT-RNR2-like protein 3</fullName>
    </alternativeName>
</protein>
<reference key="1">
    <citation type="journal article" date="2001" name="Nature">
        <title>The DNA sequence and comparative analysis of human chromosome 20.</title>
        <authorList>
            <person name="Deloukas P."/>
            <person name="Matthews L.H."/>
            <person name="Ashurst J.L."/>
            <person name="Burton J."/>
            <person name="Gilbert J.G.R."/>
            <person name="Jones M."/>
            <person name="Stavrides G."/>
            <person name="Almeida J.P."/>
            <person name="Babbage A.K."/>
            <person name="Bagguley C.L."/>
            <person name="Bailey J."/>
            <person name="Barlow K.F."/>
            <person name="Bates K.N."/>
            <person name="Beard L.M."/>
            <person name="Beare D.M."/>
            <person name="Beasley O.P."/>
            <person name="Bird C.P."/>
            <person name="Blakey S.E."/>
            <person name="Bridgeman A.M."/>
            <person name="Brown A.J."/>
            <person name="Buck D."/>
            <person name="Burrill W.D."/>
            <person name="Butler A.P."/>
            <person name="Carder C."/>
            <person name="Carter N.P."/>
            <person name="Chapman J.C."/>
            <person name="Clamp M."/>
            <person name="Clark G."/>
            <person name="Clark L.N."/>
            <person name="Clark S.Y."/>
            <person name="Clee C.M."/>
            <person name="Clegg S."/>
            <person name="Cobley V.E."/>
            <person name="Collier R.E."/>
            <person name="Connor R.E."/>
            <person name="Corby N.R."/>
            <person name="Coulson A."/>
            <person name="Coville G.J."/>
            <person name="Deadman R."/>
            <person name="Dhami P.D."/>
            <person name="Dunn M."/>
            <person name="Ellington A.G."/>
            <person name="Frankland J.A."/>
            <person name="Fraser A."/>
            <person name="French L."/>
            <person name="Garner P."/>
            <person name="Grafham D.V."/>
            <person name="Griffiths C."/>
            <person name="Griffiths M.N.D."/>
            <person name="Gwilliam R."/>
            <person name="Hall R.E."/>
            <person name="Hammond S."/>
            <person name="Harley J.L."/>
            <person name="Heath P.D."/>
            <person name="Ho S."/>
            <person name="Holden J.L."/>
            <person name="Howden P.J."/>
            <person name="Huckle E."/>
            <person name="Hunt A.R."/>
            <person name="Hunt S.E."/>
            <person name="Jekosch K."/>
            <person name="Johnson C.M."/>
            <person name="Johnson D."/>
            <person name="Kay M.P."/>
            <person name="Kimberley A.M."/>
            <person name="King A."/>
            <person name="Knights A."/>
            <person name="Laird G.K."/>
            <person name="Lawlor S."/>
            <person name="Lehvaeslaiho M.H."/>
            <person name="Leversha M.A."/>
            <person name="Lloyd C."/>
            <person name="Lloyd D.M."/>
            <person name="Lovell J.D."/>
            <person name="Marsh V.L."/>
            <person name="Martin S.L."/>
            <person name="McConnachie L.J."/>
            <person name="McLay K."/>
            <person name="McMurray A.A."/>
            <person name="Milne S.A."/>
            <person name="Mistry D."/>
            <person name="Moore M.J.F."/>
            <person name="Mullikin J.C."/>
            <person name="Nickerson T."/>
            <person name="Oliver K."/>
            <person name="Parker A."/>
            <person name="Patel R."/>
            <person name="Pearce T.A.V."/>
            <person name="Peck A.I."/>
            <person name="Phillimore B.J.C.T."/>
            <person name="Prathalingam S.R."/>
            <person name="Plumb R.W."/>
            <person name="Ramsay H."/>
            <person name="Rice C.M."/>
            <person name="Ross M.T."/>
            <person name="Scott C.E."/>
            <person name="Sehra H.K."/>
            <person name="Shownkeen R."/>
            <person name="Sims S."/>
            <person name="Skuce C.D."/>
            <person name="Smith M.L."/>
            <person name="Soderlund C."/>
            <person name="Steward C.A."/>
            <person name="Sulston J.E."/>
            <person name="Swann R.M."/>
            <person name="Sycamore N."/>
            <person name="Taylor R."/>
            <person name="Tee L."/>
            <person name="Thomas D.W."/>
            <person name="Thorpe A."/>
            <person name="Tracey A."/>
            <person name="Tromans A.C."/>
            <person name="Vaudin M."/>
            <person name="Wall M."/>
            <person name="Wallis J.M."/>
            <person name="Whitehead S.L."/>
            <person name="Whittaker P."/>
            <person name="Willey D.L."/>
            <person name="Williams L."/>
            <person name="Williams S.A."/>
            <person name="Wilming L."/>
            <person name="Wray P.W."/>
            <person name="Hubbard T."/>
            <person name="Durbin R.M."/>
            <person name="Bentley D.R."/>
            <person name="Beck S."/>
            <person name="Rogers J."/>
        </authorList>
    </citation>
    <scope>NUCLEOTIDE SEQUENCE [LARGE SCALE GENOMIC DNA]</scope>
</reference>
<reference key="2">
    <citation type="journal article" date="2009" name="Genomics">
        <title>Evidence for potential functionality of nuclearly-encoded humanin isoforms.</title>
        <authorList>
            <person name="Bodzioch M."/>
            <person name="Lapicka-Bodzioch K."/>
            <person name="Zapala B."/>
            <person name="Kamysz W."/>
            <person name="Kiec-Wilk B."/>
            <person name="Dembinska-Kiec A."/>
        </authorList>
    </citation>
    <scope>TISSUE SPECIFICITY</scope>
    <scope>INDUCTION</scope>
</reference>
<comment type="function">
    <text evidence="1">Plays a role as a neuroprotective and antiapoptotic factor.</text>
</comment>
<comment type="subcellular location">
    <subcellularLocation>
        <location evidence="1">Secreted</location>
    </subcellularLocation>
    <subcellularLocation>
        <location evidence="1">Cytoplasm</location>
    </subcellularLocation>
</comment>
<comment type="tissue specificity">
    <text evidence="2">Highly expressed in testis. Also expressed in kidney, heart, skeletal muscles and brain.</text>
</comment>
<comment type="induction">
    <text evidence="2">Down-regulated 6 hours following staurosporine (STS) treatment and up-regulated 24 hours following STS treatment. Down-regulated 6 hours following beta-carotene treatment, while it is up-regulated 24 hours following beta-carotene treatment.</text>
</comment>
<comment type="similarity">
    <text evidence="4">Belongs to the humanin family.</text>
</comment>
<comment type="caution">
    <text evidence="5">The humanin peptide has been shown to be biologically active but is the product of a mitochondrial gene, MT-RNR2. The mechanisms allowing the production and the secretion of humanin from the mitochondrial gene remaining unclear, the possibility exist that the physiologically active humanin peptide is encoded by one of the related genes present in the nuclear genome including the one described here (PubMed:19477263).</text>
</comment>
<proteinExistence type="evidence at transcript level"/>
<keyword id="KW-0963">Cytoplasm</keyword>
<keyword id="KW-1185">Reference proteome</keyword>
<keyword id="KW-0964">Secreted</keyword>
<dbReference type="EMBL" id="AL109955">
    <property type="status" value="NOT_ANNOTATED_CDS"/>
    <property type="molecule type" value="Genomic_DNA"/>
</dbReference>
<dbReference type="EMBL" id="AL135939">
    <property type="status" value="NOT_ANNOTATED_CDS"/>
    <property type="molecule type" value="Genomic_DNA"/>
</dbReference>
<dbReference type="RefSeq" id="NP_001177401.1">
    <property type="nucleotide sequence ID" value="NM_001190472.1"/>
</dbReference>
<dbReference type="STRING" id="9606.ENSP00000443339"/>
<dbReference type="iPTMnet" id="P0CJ70"/>
<dbReference type="PhosphoSitePlus" id="P0CJ70"/>
<dbReference type="BioMuta" id="MTRNR2L3"/>
<dbReference type="PaxDb" id="9606-ENSP00000443339"/>
<dbReference type="DNASU" id="100462983"/>
<dbReference type="UCSC" id="uc021wfd.2">
    <property type="organism name" value="human"/>
</dbReference>
<dbReference type="AGR" id="HGNC:37157"/>
<dbReference type="DisGeNET" id="100462983"/>
<dbReference type="GeneCards" id="MTRNR2L3"/>
<dbReference type="HGNC" id="HGNC:37157">
    <property type="gene designation" value="MTRNR2L3"/>
</dbReference>
<dbReference type="neXtProt" id="NX_P0CJ70"/>
<dbReference type="VEuPathDB" id="HostDB:ENSG00000256222"/>
<dbReference type="HOGENOM" id="CLU_221584_0_0_1"/>
<dbReference type="InParanoid" id="P0CJ70"/>
<dbReference type="PAN-GO" id="P0CJ70">
    <property type="GO annotations" value="2 GO annotations based on evolutionary models"/>
</dbReference>
<dbReference type="PhylomeDB" id="P0CJ70"/>
<dbReference type="PathwayCommons" id="P0CJ70"/>
<dbReference type="BioGRID-ORCS" id="100462983">
    <property type="hits" value="48 hits in 667 CRISPR screens"/>
</dbReference>
<dbReference type="ChiTaRS" id="MTRNR2L3">
    <property type="organism name" value="human"/>
</dbReference>
<dbReference type="Pharos" id="P0CJ70">
    <property type="development level" value="Tdark"/>
</dbReference>
<dbReference type="PRO" id="PR:P0CJ70"/>
<dbReference type="Proteomes" id="UP000005640">
    <property type="component" value="Chromosome 20"/>
</dbReference>
<dbReference type="Bgee" id="ENSG00000256222">
    <property type="expression patterns" value="Expressed in male germ line stem cell (sensu Vertebrata) in testis and 65 other cell types or tissues"/>
</dbReference>
<dbReference type="GO" id="GO:0005737">
    <property type="term" value="C:cytoplasm"/>
    <property type="evidence" value="ECO:0007669"/>
    <property type="project" value="UniProtKB-SubCell"/>
</dbReference>
<dbReference type="GO" id="GO:0005576">
    <property type="term" value="C:extracellular region"/>
    <property type="evidence" value="ECO:0007669"/>
    <property type="project" value="UniProtKB-SubCell"/>
</dbReference>
<dbReference type="GO" id="GO:0048019">
    <property type="term" value="F:receptor antagonist activity"/>
    <property type="evidence" value="ECO:0000318"/>
    <property type="project" value="GO_Central"/>
</dbReference>
<dbReference type="GO" id="GO:1900118">
    <property type="term" value="P:negative regulation of execution phase of apoptosis"/>
    <property type="evidence" value="ECO:0000318"/>
    <property type="project" value="GO_Central"/>
</dbReference>
<dbReference type="CDD" id="cd20245">
    <property type="entry name" value="humanin"/>
    <property type="match status" value="1"/>
</dbReference>
<dbReference type="InterPro" id="IPR028139">
    <property type="entry name" value="Humanin"/>
</dbReference>
<dbReference type="PANTHER" id="PTHR33895:SF7">
    <property type="entry name" value="HUMANIN-LIKE 3"/>
    <property type="match status" value="1"/>
</dbReference>
<dbReference type="PANTHER" id="PTHR33895">
    <property type="entry name" value="HUMANIN-LIKE 4"/>
    <property type="match status" value="1"/>
</dbReference>
<dbReference type="Pfam" id="PF15040">
    <property type="entry name" value="Humanin"/>
    <property type="match status" value="1"/>
</dbReference>
<accession>P0CJ70</accession>
<sequence length="24" mass="2796">MATRRFSCLLLSTSEIDLSVKRRI</sequence>
<feature type="chain" id="PRO_0000404552" description="Humanin-like 3">
    <location>
        <begin position="1"/>
        <end position="24"/>
    </location>
</feature>
<evidence type="ECO:0000250" key="1">
    <source>
        <dbReference type="UniProtKB" id="Q8IVG9"/>
    </source>
</evidence>
<evidence type="ECO:0000269" key="2">
    <source>
    </source>
</evidence>
<evidence type="ECO:0000303" key="3">
    <source>
    </source>
</evidence>
<evidence type="ECO:0000305" key="4"/>
<evidence type="ECO:0000305" key="5">
    <source>
    </source>
</evidence>
<evidence type="ECO:0000312" key="6">
    <source>
        <dbReference type="HGNC" id="HGNC:37157"/>
    </source>
</evidence>
<gene>
    <name evidence="6" type="primary">MTRNR2L3</name>
</gene>
<organism>
    <name type="scientific">Homo sapiens</name>
    <name type="common">Human</name>
    <dbReference type="NCBI Taxonomy" id="9606"/>
    <lineage>
        <taxon>Eukaryota</taxon>
        <taxon>Metazoa</taxon>
        <taxon>Chordata</taxon>
        <taxon>Craniata</taxon>
        <taxon>Vertebrata</taxon>
        <taxon>Euteleostomi</taxon>
        <taxon>Mammalia</taxon>
        <taxon>Eutheria</taxon>
        <taxon>Euarchontoglires</taxon>
        <taxon>Primates</taxon>
        <taxon>Haplorrhini</taxon>
        <taxon>Catarrhini</taxon>
        <taxon>Hominidae</taxon>
        <taxon>Homo</taxon>
    </lineage>
</organism>